<feature type="chain" id="PRO_1000131410" description="Phosphatidylserine decarboxylase beta chain" evidence="1">
    <location>
        <begin position="1"/>
        <end position="246"/>
    </location>
</feature>
<feature type="chain" id="PRO_1000131411" description="Phosphatidylserine decarboxylase alpha chain" evidence="1">
    <location>
        <begin position="247"/>
        <end position="280"/>
    </location>
</feature>
<feature type="active site" description="Charge relay system; for autoendoproteolytic cleavage activity" evidence="1">
    <location>
        <position position="88"/>
    </location>
</feature>
<feature type="active site" description="Charge relay system; for autoendoproteolytic cleavage activity" evidence="1">
    <location>
        <position position="144"/>
    </location>
</feature>
<feature type="active site" description="Charge relay system; for autoendoproteolytic cleavage activity" evidence="1">
    <location>
        <position position="247"/>
    </location>
</feature>
<feature type="active site" description="Schiff-base intermediate with substrate; via pyruvic acid; for decarboxylase activity" evidence="1">
    <location>
        <position position="247"/>
    </location>
</feature>
<feature type="site" description="Cleavage (non-hydrolytic); by autocatalysis" evidence="1">
    <location>
        <begin position="246"/>
        <end position="247"/>
    </location>
</feature>
<feature type="modified residue" description="Pyruvic acid (Ser); by autocatalysis" evidence="1">
    <location>
        <position position="247"/>
    </location>
</feature>
<sequence>MSLTTALTYALPHRLLSSMARSLAYSDDPRVSRWLIDTVTRKFNVNLDEAANPDPRSYATFNQFFTRALKPGARVADADPRSLVMPADGRISQLGRIEAGRIFQAKGQSFTAAELLGSDEDAKPYNDGLYATVYLSPRDYHRVHMPWTGTLRETVHVPGRLFSVGPAAVNGVPRLFARNERLVCHFDTSFGPMVSVMVGALLVSGVETVWSGEEIPAYGDRITRKDYRGQGIQLERFAEMARFNYGSTVIVLLPPGVAEFAPQLGAESPVQLGQALAKLR</sequence>
<reference key="1">
    <citation type="submission" date="2008-06" db="EMBL/GenBank/DDBJ databases">
        <title>Complete sequence of Stenotrophomonas maltophilia R551-3.</title>
        <authorList>
            <consortium name="US DOE Joint Genome Institute"/>
            <person name="Lucas S."/>
            <person name="Copeland A."/>
            <person name="Lapidus A."/>
            <person name="Glavina del Rio T."/>
            <person name="Dalin E."/>
            <person name="Tice H."/>
            <person name="Pitluck S."/>
            <person name="Chain P."/>
            <person name="Malfatti S."/>
            <person name="Shin M."/>
            <person name="Vergez L."/>
            <person name="Lang D."/>
            <person name="Schmutz J."/>
            <person name="Larimer F."/>
            <person name="Land M."/>
            <person name="Hauser L."/>
            <person name="Kyrpides N."/>
            <person name="Mikhailova N."/>
            <person name="Taghavi S."/>
            <person name="Monchy S."/>
            <person name="Newman L."/>
            <person name="Vangronsveld J."/>
            <person name="van der Lelie D."/>
            <person name="Richardson P."/>
        </authorList>
    </citation>
    <scope>NUCLEOTIDE SEQUENCE [LARGE SCALE GENOMIC DNA]</scope>
    <source>
        <strain>R551-3</strain>
    </source>
</reference>
<evidence type="ECO:0000255" key="1">
    <source>
        <dbReference type="HAMAP-Rule" id="MF_00662"/>
    </source>
</evidence>
<keyword id="KW-1003">Cell membrane</keyword>
<keyword id="KW-0210">Decarboxylase</keyword>
<keyword id="KW-0444">Lipid biosynthesis</keyword>
<keyword id="KW-0443">Lipid metabolism</keyword>
<keyword id="KW-0456">Lyase</keyword>
<keyword id="KW-0472">Membrane</keyword>
<keyword id="KW-0594">Phospholipid biosynthesis</keyword>
<keyword id="KW-1208">Phospholipid metabolism</keyword>
<keyword id="KW-0670">Pyruvate</keyword>
<keyword id="KW-0865">Zymogen</keyword>
<dbReference type="EC" id="4.1.1.65" evidence="1"/>
<dbReference type="EMBL" id="CP001111">
    <property type="protein sequence ID" value="ACF52559.1"/>
    <property type="molecule type" value="Genomic_DNA"/>
</dbReference>
<dbReference type="SMR" id="B4SQW4"/>
<dbReference type="STRING" id="391008.Smal_2859"/>
<dbReference type="KEGG" id="smt:Smal_2859"/>
<dbReference type="eggNOG" id="COG0688">
    <property type="taxonomic scope" value="Bacteria"/>
</dbReference>
<dbReference type="HOGENOM" id="CLU_029061_4_1_6"/>
<dbReference type="OrthoDB" id="9802030at2"/>
<dbReference type="UniPathway" id="UPA00558">
    <property type="reaction ID" value="UER00616"/>
</dbReference>
<dbReference type="Proteomes" id="UP000001867">
    <property type="component" value="Chromosome"/>
</dbReference>
<dbReference type="GO" id="GO:0005886">
    <property type="term" value="C:plasma membrane"/>
    <property type="evidence" value="ECO:0007669"/>
    <property type="project" value="UniProtKB-SubCell"/>
</dbReference>
<dbReference type="GO" id="GO:0004609">
    <property type="term" value="F:phosphatidylserine decarboxylase activity"/>
    <property type="evidence" value="ECO:0007669"/>
    <property type="project" value="UniProtKB-UniRule"/>
</dbReference>
<dbReference type="GO" id="GO:0006646">
    <property type="term" value="P:phosphatidylethanolamine biosynthetic process"/>
    <property type="evidence" value="ECO:0007669"/>
    <property type="project" value="UniProtKB-UniRule"/>
</dbReference>
<dbReference type="HAMAP" id="MF_00662">
    <property type="entry name" value="PS_decarb_PSD_B_type1"/>
    <property type="match status" value="1"/>
</dbReference>
<dbReference type="InterPro" id="IPR003817">
    <property type="entry name" value="PS_Dcarbxylase"/>
</dbReference>
<dbReference type="InterPro" id="IPR033177">
    <property type="entry name" value="PSD-B"/>
</dbReference>
<dbReference type="InterPro" id="IPR033178">
    <property type="entry name" value="PSD_type1_pro"/>
</dbReference>
<dbReference type="NCBIfam" id="TIGR00163">
    <property type="entry name" value="PS_decarb"/>
    <property type="match status" value="1"/>
</dbReference>
<dbReference type="PANTHER" id="PTHR10067">
    <property type="entry name" value="PHOSPHATIDYLSERINE DECARBOXYLASE"/>
    <property type="match status" value="1"/>
</dbReference>
<dbReference type="PANTHER" id="PTHR10067:SF6">
    <property type="entry name" value="PHOSPHATIDYLSERINE DECARBOXYLASE PROENZYME, MITOCHONDRIAL"/>
    <property type="match status" value="1"/>
</dbReference>
<dbReference type="Pfam" id="PF02666">
    <property type="entry name" value="PS_Dcarbxylase"/>
    <property type="match status" value="1"/>
</dbReference>
<gene>
    <name evidence="1" type="primary">psd</name>
    <name type="ordered locus">Smal_2859</name>
</gene>
<comment type="function">
    <text evidence="1">Catalyzes the formation of phosphatidylethanolamine (PtdEtn) from phosphatidylserine (PtdSer).</text>
</comment>
<comment type="catalytic activity">
    <reaction evidence="1">
        <text>a 1,2-diacyl-sn-glycero-3-phospho-L-serine + H(+) = a 1,2-diacyl-sn-glycero-3-phosphoethanolamine + CO2</text>
        <dbReference type="Rhea" id="RHEA:20828"/>
        <dbReference type="ChEBI" id="CHEBI:15378"/>
        <dbReference type="ChEBI" id="CHEBI:16526"/>
        <dbReference type="ChEBI" id="CHEBI:57262"/>
        <dbReference type="ChEBI" id="CHEBI:64612"/>
        <dbReference type="EC" id="4.1.1.65"/>
    </reaction>
</comment>
<comment type="cofactor">
    <cofactor evidence="1">
        <name>pyruvate</name>
        <dbReference type="ChEBI" id="CHEBI:15361"/>
    </cofactor>
    <text evidence="1">Binds 1 pyruvoyl group covalently per subunit.</text>
</comment>
<comment type="pathway">
    <text evidence="1">Phospholipid metabolism; phosphatidylethanolamine biosynthesis; phosphatidylethanolamine from CDP-diacylglycerol: step 2/2.</text>
</comment>
<comment type="subunit">
    <text evidence="1">Heterodimer of a large membrane-associated beta subunit and a small pyruvoyl-containing alpha subunit.</text>
</comment>
<comment type="subcellular location">
    <subcellularLocation>
        <location evidence="1">Cell membrane</location>
        <topology evidence="1">Peripheral membrane protein</topology>
    </subcellularLocation>
</comment>
<comment type="PTM">
    <text evidence="1">Is synthesized initially as an inactive proenzyme. Formation of the active enzyme involves a self-maturation process in which the active site pyruvoyl group is generated from an internal serine residue via an autocatalytic post-translational modification. Two non-identical subunits are generated from the proenzyme in this reaction, and the pyruvate is formed at the N-terminus of the alpha chain, which is derived from the carboxyl end of the proenzyme. The autoendoproteolytic cleavage occurs by a canonical serine protease mechanism, in which the side chain hydroxyl group of the serine supplies its oxygen atom to form the C-terminus of the beta chain, while the remainder of the serine residue undergoes an oxidative deamination to produce ammonia and the pyruvoyl prosthetic group on the alpha chain. During this reaction, the Ser that is part of the protease active site of the proenzyme becomes the pyruvoyl prosthetic group, which constitutes an essential element of the active site of the mature decarboxylase.</text>
</comment>
<comment type="similarity">
    <text evidence="1">Belongs to the phosphatidylserine decarboxylase family. PSD-B subfamily. Prokaryotic type I sub-subfamily.</text>
</comment>
<organism>
    <name type="scientific">Stenotrophomonas maltophilia (strain R551-3)</name>
    <dbReference type="NCBI Taxonomy" id="391008"/>
    <lineage>
        <taxon>Bacteria</taxon>
        <taxon>Pseudomonadati</taxon>
        <taxon>Pseudomonadota</taxon>
        <taxon>Gammaproteobacteria</taxon>
        <taxon>Lysobacterales</taxon>
        <taxon>Lysobacteraceae</taxon>
        <taxon>Stenotrophomonas</taxon>
        <taxon>Stenotrophomonas maltophilia group</taxon>
    </lineage>
</organism>
<accession>B4SQW4</accession>
<name>PSD_STRM5</name>
<protein>
    <recommendedName>
        <fullName evidence="1">Phosphatidylserine decarboxylase proenzyme</fullName>
        <ecNumber evidence="1">4.1.1.65</ecNumber>
    </recommendedName>
    <component>
        <recommendedName>
            <fullName evidence="1">Phosphatidylserine decarboxylase alpha chain</fullName>
        </recommendedName>
    </component>
    <component>
        <recommendedName>
            <fullName evidence="1">Phosphatidylserine decarboxylase beta chain</fullName>
        </recommendedName>
    </component>
</protein>
<proteinExistence type="inferred from homology"/>